<keyword id="KW-0687">Ribonucleoprotein</keyword>
<keyword id="KW-0689">Ribosomal protein</keyword>
<evidence type="ECO:0000255" key="1">
    <source>
        <dbReference type="HAMAP-Rule" id="MF_00514"/>
    </source>
</evidence>
<evidence type="ECO:0000256" key="2">
    <source>
        <dbReference type="SAM" id="MobiDB-lite"/>
    </source>
</evidence>
<evidence type="ECO:0000305" key="3"/>
<accession>C4XL13</accession>
<sequence length="65" mass="7312">MPKMKTNRSAAKRFGKTGSGKFTRRRQNLRHILTKKSAKRTRRLGQGALVDSANVKAVSRLLPYA</sequence>
<proteinExistence type="inferred from homology"/>
<feature type="chain" id="PRO_1000211699" description="Large ribosomal subunit protein bL35">
    <location>
        <begin position="1"/>
        <end position="65"/>
    </location>
</feature>
<feature type="region of interest" description="Disordered" evidence="2">
    <location>
        <begin position="1"/>
        <end position="28"/>
    </location>
</feature>
<comment type="similarity">
    <text evidence="1">Belongs to the bacterial ribosomal protein bL35 family.</text>
</comment>
<protein>
    <recommendedName>
        <fullName evidence="1">Large ribosomal subunit protein bL35</fullName>
    </recommendedName>
    <alternativeName>
        <fullName evidence="3">50S ribosomal protein L35</fullName>
    </alternativeName>
</protein>
<name>RL35_SOLM1</name>
<reference key="1">
    <citation type="journal article" date="2009" name="Genome Res.">
        <title>Whole genome sequence of Desulfovibrio magneticus strain RS-1 revealed common gene clusters in magnetotactic bacteria.</title>
        <authorList>
            <person name="Nakazawa H."/>
            <person name="Arakaki A."/>
            <person name="Narita-Yamada S."/>
            <person name="Yashiro I."/>
            <person name="Jinno K."/>
            <person name="Aoki N."/>
            <person name="Tsuruyama A."/>
            <person name="Okamura Y."/>
            <person name="Tanikawa S."/>
            <person name="Fujita N."/>
            <person name="Takeyama H."/>
            <person name="Matsunaga T."/>
        </authorList>
    </citation>
    <scope>NUCLEOTIDE SEQUENCE [LARGE SCALE GENOMIC DNA]</scope>
    <source>
        <strain>ATCC 700980 / DSM 13731 / RS-1</strain>
    </source>
</reference>
<gene>
    <name evidence="1" type="primary">rpmI</name>
    <name type="ordered locus">DMR_10610</name>
</gene>
<organism>
    <name type="scientific">Solidesulfovibrio magneticus (strain ATCC 700980 / DSM 13731 / RS-1)</name>
    <name type="common">Desulfovibrio magneticus</name>
    <dbReference type="NCBI Taxonomy" id="573370"/>
    <lineage>
        <taxon>Bacteria</taxon>
        <taxon>Pseudomonadati</taxon>
        <taxon>Thermodesulfobacteriota</taxon>
        <taxon>Desulfovibrionia</taxon>
        <taxon>Desulfovibrionales</taxon>
        <taxon>Desulfovibrionaceae</taxon>
        <taxon>Solidesulfovibrio</taxon>
    </lineage>
</organism>
<dbReference type="EMBL" id="AP010904">
    <property type="protein sequence ID" value="BAH74552.1"/>
    <property type="molecule type" value="Genomic_DNA"/>
</dbReference>
<dbReference type="RefSeq" id="WP_006918489.1">
    <property type="nucleotide sequence ID" value="NC_012796.1"/>
</dbReference>
<dbReference type="SMR" id="C4XL13"/>
<dbReference type="STRING" id="573370.DMR_10610"/>
<dbReference type="KEGG" id="dma:DMR_10610"/>
<dbReference type="eggNOG" id="COG0291">
    <property type="taxonomic scope" value="Bacteria"/>
</dbReference>
<dbReference type="HOGENOM" id="CLU_169643_1_1_7"/>
<dbReference type="OrthoDB" id="9804851at2"/>
<dbReference type="Proteomes" id="UP000009071">
    <property type="component" value="Chromosome"/>
</dbReference>
<dbReference type="GO" id="GO:0022625">
    <property type="term" value="C:cytosolic large ribosomal subunit"/>
    <property type="evidence" value="ECO:0007669"/>
    <property type="project" value="TreeGrafter"/>
</dbReference>
<dbReference type="GO" id="GO:0003735">
    <property type="term" value="F:structural constituent of ribosome"/>
    <property type="evidence" value="ECO:0007669"/>
    <property type="project" value="InterPro"/>
</dbReference>
<dbReference type="GO" id="GO:0006412">
    <property type="term" value="P:translation"/>
    <property type="evidence" value="ECO:0007669"/>
    <property type="project" value="UniProtKB-UniRule"/>
</dbReference>
<dbReference type="FunFam" id="4.10.410.60:FF:000001">
    <property type="entry name" value="50S ribosomal protein L35"/>
    <property type="match status" value="1"/>
</dbReference>
<dbReference type="Gene3D" id="4.10.410.60">
    <property type="match status" value="1"/>
</dbReference>
<dbReference type="HAMAP" id="MF_00514">
    <property type="entry name" value="Ribosomal_bL35"/>
    <property type="match status" value="1"/>
</dbReference>
<dbReference type="InterPro" id="IPR001706">
    <property type="entry name" value="Ribosomal_bL35"/>
</dbReference>
<dbReference type="InterPro" id="IPR021137">
    <property type="entry name" value="Ribosomal_bL35-like"/>
</dbReference>
<dbReference type="InterPro" id="IPR018265">
    <property type="entry name" value="Ribosomal_bL35_CS"/>
</dbReference>
<dbReference type="InterPro" id="IPR037229">
    <property type="entry name" value="Ribosomal_bL35_sf"/>
</dbReference>
<dbReference type="NCBIfam" id="TIGR00001">
    <property type="entry name" value="rpmI_bact"/>
    <property type="match status" value="1"/>
</dbReference>
<dbReference type="PANTHER" id="PTHR33343">
    <property type="entry name" value="54S RIBOSOMAL PROTEIN BL35M"/>
    <property type="match status" value="1"/>
</dbReference>
<dbReference type="PANTHER" id="PTHR33343:SF1">
    <property type="entry name" value="LARGE RIBOSOMAL SUBUNIT PROTEIN BL35M"/>
    <property type="match status" value="1"/>
</dbReference>
<dbReference type="Pfam" id="PF01632">
    <property type="entry name" value="Ribosomal_L35p"/>
    <property type="match status" value="1"/>
</dbReference>
<dbReference type="PRINTS" id="PR00064">
    <property type="entry name" value="RIBOSOMALL35"/>
</dbReference>
<dbReference type="SUPFAM" id="SSF143034">
    <property type="entry name" value="L35p-like"/>
    <property type="match status" value="1"/>
</dbReference>
<dbReference type="PROSITE" id="PS00936">
    <property type="entry name" value="RIBOSOMAL_L35"/>
    <property type="match status" value="1"/>
</dbReference>